<comment type="function">
    <text evidence="1">Formation of pseudouridine at positions 38, 39 and 40 in the anticodon stem and loop of transfer RNAs.</text>
</comment>
<comment type="catalytic activity">
    <reaction evidence="1">
        <text>uridine(38/39/40) in tRNA = pseudouridine(38/39/40) in tRNA</text>
        <dbReference type="Rhea" id="RHEA:22376"/>
        <dbReference type="Rhea" id="RHEA-COMP:10085"/>
        <dbReference type="Rhea" id="RHEA-COMP:10087"/>
        <dbReference type="ChEBI" id="CHEBI:65314"/>
        <dbReference type="ChEBI" id="CHEBI:65315"/>
        <dbReference type="EC" id="5.4.99.12"/>
    </reaction>
</comment>
<comment type="similarity">
    <text evidence="1">Belongs to the tRNA pseudouridine synthase TruA family.</text>
</comment>
<sequence length="262" mass="30410">MYIFKIAYDGRLSFQTQPHGETVCDKISNALLDCGYLDNKDRVPLYHGGRTDRGVSALGNYIVYEMDKKPVLPRVQSKLKWDGVWVLGCKEIDTFPEIEYRHYQYNLPNKNHDVELMKKASEKLIGTHYFQNLSKRDKSKVKDPVRTLYNIKISSNDYFITIDIFGESFLWNMVRRIIRLLSDIGKHKIKDPEKFIELILSEDYSKGYPPSPAEGLILVDVKTNIDVDIDSYVLRMLKNSWEKSLNNSLMRLGLCKTVLSKT</sequence>
<reference key="1">
    <citation type="submission" date="2007-10" db="EMBL/GenBank/DDBJ databases">
        <title>Complete sequence of Methanococcus maripaludis C6.</title>
        <authorList>
            <consortium name="US DOE Joint Genome Institute"/>
            <person name="Copeland A."/>
            <person name="Lucas S."/>
            <person name="Lapidus A."/>
            <person name="Barry K."/>
            <person name="Glavina del Rio T."/>
            <person name="Dalin E."/>
            <person name="Tice H."/>
            <person name="Pitluck S."/>
            <person name="Clum A."/>
            <person name="Schmutz J."/>
            <person name="Larimer F."/>
            <person name="Land M."/>
            <person name="Hauser L."/>
            <person name="Kyrpides N."/>
            <person name="Mikhailova N."/>
            <person name="Sieprawska-Lupa M."/>
            <person name="Whitman W.B."/>
            <person name="Richardson P."/>
        </authorList>
    </citation>
    <scope>NUCLEOTIDE SEQUENCE [LARGE SCALE GENOMIC DNA]</scope>
    <source>
        <strain>C6 / ATCC BAA-1332</strain>
    </source>
</reference>
<evidence type="ECO:0000255" key="1">
    <source>
        <dbReference type="HAMAP-Rule" id="MF_00171"/>
    </source>
</evidence>
<name>TRUA_METM6</name>
<keyword id="KW-0413">Isomerase</keyword>
<keyword id="KW-0819">tRNA processing</keyword>
<accession>A9A828</accession>
<feature type="chain" id="PRO_1000097760" description="tRNA pseudouridine synthase A">
    <location>
        <begin position="1"/>
        <end position="262"/>
    </location>
</feature>
<feature type="active site" description="Nucleophile" evidence="1">
    <location>
        <position position="52"/>
    </location>
</feature>
<feature type="binding site" evidence="1">
    <location>
        <position position="103"/>
    </location>
    <ligand>
        <name>substrate</name>
    </ligand>
</feature>
<organism>
    <name type="scientific">Methanococcus maripaludis (strain C6 / ATCC BAA-1332)</name>
    <dbReference type="NCBI Taxonomy" id="444158"/>
    <lineage>
        <taxon>Archaea</taxon>
        <taxon>Methanobacteriati</taxon>
        <taxon>Methanobacteriota</taxon>
        <taxon>Methanomada group</taxon>
        <taxon>Methanococci</taxon>
        <taxon>Methanococcales</taxon>
        <taxon>Methanococcaceae</taxon>
        <taxon>Methanococcus</taxon>
    </lineage>
</organism>
<dbReference type="EC" id="5.4.99.12" evidence="1"/>
<dbReference type="EMBL" id="CP000867">
    <property type="protein sequence ID" value="ABX01501.1"/>
    <property type="molecule type" value="Genomic_DNA"/>
</dbReference>
<dbReference type="SMR" id="A9A828"/>
<dbReference type="STRING" id="444158.MmarC6_0684"/>
<dbReference type="KEGG" id="mmx:MmarC6_0684"/>
<dbReference type="eggNOG" id="arCOG04449">
    <property type="taxonomic scope" value="Archaea"/>
</dbReference>
<dbReference type="HOGENOM" id="CLU_014673_4_2_2"/>
<dbReference type="OrthoDB" id="25720at2157"/>
<dbReference type="PhylomeDB" id="A9A828"/>
<dbReference type="GO" id="GO:0003723">
    <property type="term" value="F:RNA binding"/>
    <property type="evidence" value="ECO:0007669"/>
    <property type="project" value="InterPro"/>
</dbReference>
<dbReference type="GO" id="GO:0160147">
    <property type="term" value="F:tRNA pseudouridine(38-40) synthase activity"/>
    <property type="evidence" value="ECO:0007669"/>
    <property type="project" value="UniProtKB-EC"/>
</dbReference>
<dbReference type="GO" id="GO:0031119">
    <property type="term" value="P:tRNA pseudouridine synthesis"/>
    <property type="evidence" value="ECO:0007669"/>
    <property type="project" value="UniProtKB-UniRule"/>
</dbReference>
<dbReference type="CDD" id="cd02866">
    <property type="entry name" value="PseudoU_synth_TruA_Archea"/>
    <property type="match status" value="1"/>
</dbReference>
<dbReference type="Gene3D" id="3.30.70.660">
    <property type="entry name" value="Pseudouridine synthase I, catalytic domain, C-terminal subdomain"/>
    <property type="match status" value="1"/>
</dbReference>
<dbReference type="Gene3D" id="3.30.70.580">
    <property type="entry name" value="Pseudouridine synthase I, catalytic domain, N-terminal subdomain"/>
    <property type="match status" value="1"/>
</dbReference>
<dbReference type="HAMAP" id="MF_00171">
    <property type="entry name" value="TruA"/>
    <property type="match status" value="1"/>
</dbReference>
<dbReference type="InterPro" id="IPR020103">
    <property type="entry name" value="PsdUridine_synth_cat_dom_sf"/>
</dbReference>
<dbReference type="InterPro" id="IPR001406">
    <property type="entry name" value="PsdUridine_synth_TruA"/>
</dbReference>
<dbReference type="InterPro" id="IPR020097">
    <property type="entry name" value="PsdUridine_synth_TruA_a/b_dom"/>
</dbReference>
<dbReference type="InterPro" id="IPR020095">
    <property type="entry name" value="PsdUridine_synth_TruA_C"/>
</dbReference>
<dbReference type="InterPro" id="IPR020094">
    <property type="entry name" value="TruA/RsuA/RluB/E/F_N"/>
</dbReference>
<dbReference type="PANTHER" id="PTHR11142">
    <property type="entry name" value="PSEUDOURIDYLATE SYNTHASE"/>
    <property type="match status" value="1"/>
</dbReference>
<dbReference type="PANTHER" id="PTHR11142:SF0">
    <property type="entry name" value="TRNA PSEUDOURIDINE SYNTHASE-LIKE 1"/>
    <property type="match status" value="1"/>
</dbReference>
<dbReference type="Pfam" id="PF01416">
    <property type="entry name" value="PseudoU_synth_1"/>
    <property type="match status" value="1"/>
</dbReference>
<dbReference type="PIRSF" id="PIRSF001430">
    <property type="entry name" value="tRNA_psdUrid_synth"/>
    <property type="match status" value="1"/>
</dbReference>
<dbReference type="SUPFAM" id="SSF55120">
    <property type="entry name" value="Pseudouridine synthase"/>
    <property type="match status" value="1"/>
</dbReference>
<gene>
    <name evidence="1" type="primary">truA</name>
    <name type="ordered locus">MmarC6_0684</name>
</gene>
<proteinExistence type="inferred from homology"/>
<protein>
    <recommendedName>
        <fullName evidence="1">tRNA pseudouridine synthase A</fullName>
        <ecNumber evidence="1">5.4.99.12</ecNumber>
    </recommendedName>
    <alternativeName>
        <fullName evidence="1">tRNA pseudouridine(38-40) synthase</fullName>
    </alternativeName>
    <alternativeName>
        <fullName evidence="1">tRNA pseudouridylate synthase I</fullName>
    </alternativeName>
    <alternativeName>
        <fullName evidence="1">tRNA-uridine isomerase I</fullName>
    </alternativeName>
</protein>